<sequence length="179" mass="20569">MPSPALLCCCLVLLAGVGASRHQSTLSEDDCTHFPASLPHMLRELRAAFGRVKTFFQMKDKLDNILLTGSLLEDFKGYLGCQALSEMIQFYLEEVMPRAENHDPDIKDHVNSLGEKLKTLRLRLRRCHRFLPCENKSKAVEQVKSAFSKLQEKGVYKAMSEFDIFINYIETYMTMRMKI</sequence>
<name>IL10_VULVU</name>
<protein>
    <recommendedName>
        <fullName>Interleukin-10</fullName>
        <shortName>IL-10</shortName>
    </recommendedName>
    <alternativeName>
        <fullName>Cytokine synthesis inhibitory factor</fullName>
        <shortName>CSIF</shortName>
    </alternativeName>
</protein>
<dbReference type="EMBL" id="AJ621190">
    <property type="protein sequence ID" value="CAF18414.1"/>
    <property type="molecule type" value="mRNA"/>
</dbReference>
<dbReference type="RefSeq" id="XP_025843084.1">
    <property type="nucleotide sequence ID" value="XM_025987299.1"/>
</dbReference>
<dbReference type="SMR" id="Q25BC1"/>
<dbReference type="STRING" id="9627.ENSVVUP00000000928"/>
<dbReference type="GlyCosmos" id="Q25BC1">
    <property type="glycosylation" value="1 site, No reported glycans"/>
</dbReference>
<dbReference type="Ensembl" id="ENSVVUT00000001400">
    <property type="protein sequence ID" value="ENSVVUP00000000928"/>
    <property type="gene ID" value="ENSVVUG00000000748"/>
</dbReference>
<dbReference type="GeneID" id="112910982"/>
<dbReference type="OMA" id="CHRFFTC"/>
<dbReference type="Proteomes" id="UP000286640">
    <property type="component" value="Unplaced"/>
</dbReference>
<dbReference type="GO" id="GO:0005615">
    <property type="term" value="C:extracellular space"/>
    <property type="evidence" value="ECO:0000250"/>
    <property type="project" value="UniProtKB"/>
</dbReference>
<dbReference type="GO" id="GO:0005125">
    <property type="term" value="F:cytokine activity"/>
    <property type="evidence" value="ECO:0007669"/>
    <property type="project" value="UniProtKB-KW"/>
</dbReference>
<dbReference type="GO" id="GO:0046983">
    <property type="term" value="F:protein dimerization activity"/>
    <property type="evidence" value="ECO:0007669"/>
    <property type="project" value="Ensembl"/>
</dbReference>
<dbReference type="GO" id="GO:0060670">
    <property type="term" value="P:branching involved in labyrinthine layer morphogenesis"/>
    <property type="evidence" value="ECO:0007669"/>
    <property type="project" value="Ensembl"/>
</dbReference>
<dbReference type="GO" id="GO:0035729">
    <property type="term" value="P:cellular response to hepatocyte growth factor stimulus"/>
    <property type="evidence" value="ECO:0007669"/>
    <property type="project" value="Ensembl"/>
</dbReference>
<dbReference type="GO" id="GO:0071222">
    <property type="term" value="P:cellular response to lipopolysaccharide"/>
    <property type="evidence" value="ECO:0007669"/>
    <property type="project" value="Ensembl"/>
</dbReference>
<dbReference type="GO" id="GO:0002439">
    <property type="term" value="P:chronic inflammatory response to antigenic stimulus"/>
    <property type="evidence" value="ECO:0007669"/>
    <property type="project" value="Ensembl"/>
</dbReference>
<dbReference type="GO" id="GO:0042742">
    <property type="term" value="P:defense response to bacterium"/>
    <property type="evidence" value="ECO:0007669"/>
    <property type="project" value="Ensembl"/>
</dbReference>
<dbReference type="GO" id="GO:0042832">
    <property type="term" value="P:defense response to protozoan"/>
    <property type="evidence" value="ECO:0007669"/>
    <property type="project" value="Ensembl"/>
</dbReference>
<dbReference type="GO" id="GO:0140105">
    <property type="term" value="P:interleukin-10-mediated signaling pathway"/>
    <property type="evidence" value="ECO:0007669"/>
    <property type="project" value="Ensembl"/>
</dbReference>
<dbReference type="GO" id="GO:0010507">
    <property type="term" value="P:negative regulation of autophagy"/>
    <property type="evidence" value="ECO:0007669"/>
    <property type="project" value="Ensembl"/>
</dbReference>
<dbReference type="GO" id="GO:0030889">
    <property type="term" value="P:negative regulation of B cell proliferation"/>
    <property type="evidence" value="ECO:0000250"/>
    <property type="project" value="UniProtKB"/>
</dbReference>
<dbReference type="GO" id="GO:0002875">
    <property type="term" value="P:negative regulation of chronic inflammatory response to antigenic stimulus"/>
    <property type="evidence" value="ECO:0007669"/>
    <property type="project" value="Ensembl"/>
</dbReference>
<dbReference type="GO" id="GO:0002719">
    <property type="term" value="P:negative regulation of cytokine production involved in immune response"/>
    <property type="evidence" value="ECO:0000250"/>
    <property type="project" value="UniProtKB"/>
</dbReference>
<dbReference type="GO" id="GO:2000352">
    <property type="term" value="P:negative regulation of endothelial cell apoptotic process"/>
    <property type="evidence" value="ECO:0007669"/>
    <property type="project" value="Ensembl"/>
</dbReference>
<dbReference type="GO" id="GO:0034115">
    <property type="term" value="P:negative regulation of heterotypic cell-cell adhesion"/>
    <property type="evidence" value="ECO:0007669"/>
    <property type="project" value="Ensembl"/>
</dbReference>
<dbReference type="GO" id="GO:0050728">
    <property type="term" value="P:negative regulation of inflammatory response"/>
    <property type="evidence" value="ECO:0000250"/>
    <property type="project" value="UniProtKB"/>
</dbReference>
<dbReference type="GO" id="GO:0032695">
    <property type="term" value="P:negative regulation of interleukin-12 production"/>
    <property type="evidence" value="ECO:0007669"/>
    <property type="project" value="Ensembl"/>
</dbReference>
<dbReference type="GO" id="GO:0032715">
    <property type="term" value="P:negative regulation of interleukin-6 production"/>
    <property type="evidence" value="ECO:0000250"/>
    <property type="project" value="UniProtKB"/>
</dbReference>
<dbReference type="GO" id="GO:0051045">
    <property type="term" value="P:negative regulation of membrane protein ectodomain proteolysis"/>
    <property type="evidence" value="ECO:0000250"/>
    <property type="project" value="UniProtKB"/>
</dbReference>
<dbReference type="GO" id="GO:0045347">
    <property type="term" value="P:negative regulation of MHC class II biosynthetic process"/>
    <property type="evidence" value="ECO:0007669"/>
    <property type="project" value="Ensembl"/>
</dbReference>
<dbReference type="GO" id="GO:0030886">
    <property type="term" value="P:negative regulation of myeloid dendritic cell activation"/>
    <property type="evidence" value="ECO:0007669"/>
    <property type="project" value="Ensembl"/>
</dbReference>
<dbReference type="GO" id="GO:1903377">
    <property type="term" value="P:negative regulation of oxidative stress-induced neuron intrinsic apoptotic signaling pathway"/>
    <property type="evidence" value="ECO:0007669"/>
    <property type="project" value="Ensembl"/>
</dbReference>
<dbReference type="GO" id="GO:0032720">
    <property type="term" value="P:negative regulation of tumor necrosis factor production"/>
    <property type="evidence" value="ECO:0007669"/>
    <property type="project" value="Ensembl"/>
</dbReference>
<dbReference type="GO" id="GO:0032689">
    <property type="term" value="P:negative regulation of type II interferon production"/>
    <property type="evidence" value="ECO:0007669"/>
    <property type="project" value="Ensembl"/>
</dbReference>
<dbReference type="GO" id="GO:1904706">
    <property type="term" value="P:negative regulation of vascular associated smooth muscle cell proliferation"/>
    <property type="evidence" value="ECO:0007669"/>
    <property type="project" value="Ensembl"/>
</dbReference>
<dbReference type="GO" id="GO:0002904">
    <property type="term" value="P:positive regulation of B cell apoptotic process"/>
    <property type="evidence" value="ECO:0000250"/>
    <property type="project" value="UniProtKB"/>
</dbReference>
<dbReference type="GO" id="GO:0045787">
    <property type="term" value="P:positive regulation of cell cycle"/>
    <property type="evidence" value="ECO:0007669"/>
    <property type="project" value="Ensembl"/>
</dbReference>
<dbReference type="GO" id="GO:0001819">
    <property type="term" value="P:positive regulation of cytokine production"/>
    <property type="evidence" value="ECO:0000250"/>
    <property type="project" value="UniProtKB"/>
</dbReference>
<dbReference type="GO" id="GO:0051091">
    <property type="term" value="P:positive regulation of DNA-binding transcription factor activity"/>
    <property type="evidence" value="ECO:0000250"/>
    <property type="project" value="UniProtKB"/>
</dbReference>
<dbReference type="GO" id="GO:0045893">
    <property type="term" value="P:positive regulation of DNA-templated transcription"/>
    <property type="evidence" value="ECO:0000250"/>
    <property type="project" value="UniProtKB"/>
</dbReference>
<dbReference type="GO" id="GO:0001938">
    <property type="term" value="P:positive regulation of endothelial cell proliferation"/>
    <property type="evidence" value="ECO:0007669"/>
    <property type="project" value="Ensembl"/>
</dbReference>
<dbReference type="GO" id="GO:0002639">
    <property type="term" value="P:positive regulation of immunoglobulin production"/>
    <property type="evidence" value="ECO:0007669"/>
    <property type="project" value="Ensembl"/>
</dbReference>
<dbReference type="GO" id="GO:0045348">
    <property type="term" value="P:positive regulation of MHC class II biosynthetic process"/>
    <property type="evidence" value="ECO:0007669"/>
    <property type="project" value="Ensembl"/>
</dbReference>
<dbReference type="GO" id="GO:1902895">
    <property type="term" value="P:positive regulation of miRNA transcription"/>
    <property type="evidence" value="ECO:0007669"/>
    <property type="project" value="Ensembl"/>
</dbReference>
<dbReference type="GO" id="GO:1900100">
    <property type="term" value="P:positive regulation of plasma cell differentiation"/>
    <property type="evidence" value="ECO:0007669"/>
    <property type="project" value="Ensembl"/>
</dbReference>
<dbReference type="GO" id="GO:0046427">
    <property type="term" value="P:positive regulation of receptor signaling pathway via JAK-STAT"/>
    <property type="evidence" value="ECO:0007669"/>
    <property type="project" value="Ensembl"/>
</dbReference>
<dbReference type="GO" id="GO:1903672">
    <property type="term" value="P:positive regulation of sprouting angiogenesis"/>
    <property type="evidence" value="ECO:0007669"/>
    <property type="project" value="Ensembl"/>
</dbReference>
<dbReference type="GO" id="GO:0045944">
    <property type="term" value="P:positive regulation of transcription by RNA polymerase II"/>
    <property type="evidence" value="ECO:0007669"/>
    <property type="project" value="Ensembl"/>
</dbReference>
<dbReference type="GO" id="GO:1903034">
    <property type="term" value="P:regulation of response to wounding"/>
    <property type="evidence" value="ECO:0007669"/>
    <property type="project" value="Ensembl"/>
</dbReference>
<dbReference type="GO" id="GO:0051384">
    <property type="term" value="P:response to glucocorticoid"/>
    <property type="evidence" value="ECO:0000250"/>
    <property type="project" value="UniProtKB"/>
</dbReference>
<dbReference type="GO" id="GO:0002237">
    <property type="term" value="P:response to molecule of bacterial origin"/>
    <property type="evidence" value="ECO:0000250"/>
    <property type="project" value="UniProtKB"/>
</dbReference>
<dbReference type="FunFam" id="1.20.1250.10:FF:000011">
    <property type="entry name" value="Interleukin-10"/>
    <property type="match status" value="1"/>
</dbReference>
<dbReference type="Gene3D" id="1.20.1250.10">
    <property type="match status" value="1"/>
</dbReference>
<dbReference type="InterPro" id="IPR009079">
    <property type="entry name" value="4_helix_cytokine-like_core"/>
</dbReference>
<dbReference type="InterPro" id="IPR000098">
    <property type="entry name" value="IL-10"/>
</dbReference>
<dbReference type="InterPro" id="IPR020443">
    <property type="entry name" value="IL-10/19/20/24/26"/>
</dbReference>
<dbReference type="InterPro" id="IPR020423">
    <property type="entry name" value="IL-10_CS"/>
</dbReference>
<dbReference type="PANTHER" id="PTHR48482:SF5">
    <property type="entry name" value="INTERLEUKIN-10"/>
    <property type="match status" value="1"/>
</dbReference>
<dbReference type="PANTHER" id="PTHR48482">
    <property type="entry name" value="INTERLEUKIN-19-RELATED"/>
    <property type="match status" value="1"/>
</dbReference>
<dbReference type="Pfam" id="PF00726">
    <property type="entry name" value="IL10"/>
    <property type="match status" value="1"/>
</dbReference>
<dbReference type="PRINTS" id="PR01294">
    <property type="entry name" value="INTRLEUKIN10"/>
</dbReference>
<dbReference type="SMART" id="SM00188">
    <property type="entry name" value="IL10"/>
    <property type="match status" value="1"/>
</dbReference>
<dbReference type="SUPFAM" id="SSF47266">
    <property type="entry name" value="4-helical cytokines"/>
    <property type="match status" value="1"/>
</dbReference>
<dbReference type="PROSITE" id="PS00520">
    <property type="entry name" value="INTERLEUKIN_10"/>
    <property type="match status" value="1"/>
</dbReference>
<accession>Q25BC1</accession>
<comment type="function">
    <text evidence="2 3">Major immune regulatory cytokine that acts on many cells of the immune system where it has profound anti-inflammatory functions, limiting excessive tissue disruption caused by inflammation. Mechanistically, IL10 binds to its heterotetrameric receptor comprising IL10RA and IL10RB leading to JAK1 and STAT2-mediated phosphorylation of STAT3. In turn, STAT3 translocates to the nucleus where it drives expression of anti-inflammatory mediators. Targets antigen-presenting cells (APCs) such as macrophages and monocytes and inhibits their release of pro-inflammatory cytokines including granulocyte-macrophage colony-stimulating factor /GM-CSF, granulocyte colony-stimulating factor/G-CSF, IL-1 alpha, IL-1 beta, IL-6, IL-8 and TNF-alpha. Also interferes with antigen presentation by reducing the expression of MHC-class II and co-stimulatory molecules, thereby inhibiting their ability to induce T cell activation (By similarity). In addition, controls the inflammatory response of macrophages by reprogramming essential metabolic pathways including mTOR signaling (By similarity).</text>
</comment>
<comment type="subunit">
    <text evidence="3">Homodimer. Interacts with IL10RA and IL10RB.</text>
</comment>
<comment type="subcellular location">
    <subcellularLocation>
        <location evidence="3">Secreted</location>
    </subcellularLocation>
</comment>
<comment type="similarity">
    <text evidence="5">Belongs to the IL-10 family.</text>
</comment>
<reference key="1">
    <citation type="journal article" date="2006" name="Vet. Immunol. Immunopathol.">
        <title>Cloning of fox (Vulpes vulpes) IL2, IL6, IL10 and IFNgamma and analysis of their expression by quantitative RT-PCR in fox PBMC after in vitro stimulation by concanavalin A.</title>
        <authorList>
            <person name="Rolland-Turner M."/>
            <person name="Farre G."/>
            <person name="Boue F."/>
        </authorList>
    </citation>
    <scope>NUCLEOTIDE SEQUENCE [MRNA]</scope>
</reference>
<keyword id="KW-0202">Cytokine</keyword>
<keyword id="KW-1015">Disulfide bond</keyword>
<keyword id="KW-0325">Glycoprotein</keyword>
<keyword id="KW-1185">Reference proteome</keyword>
<keyword id="KW-0964">Secreted</keyword>
<keyword id="KW-0732">Signal</keyword>
<proteinExistence type="evidence at transcript level"/>
<evidence type="ECO:0000250" key="1"/>
<evidence type="ECO:0000250" key="2">
    <source>
        <dbReference type="UniProtKB" id="P18893"/>
    </source>
</evidence>
<evidence type="ECO:0000250" key="3">
    <source>
        <dbReference type="UniProtKB" id="P22301"/>
    </source>
</evidence>
<evidence type="ECO:0000255" key="4"/>
<evidence type="ECO:0000305" key="5"/>
<organism>
    <name type="scientific">Vulpes vulpes</name>
    <name type="common">Red fox</name>
    <dbReference type="NCBI Taxonomy" id="9627"/>
    <lineage>
        <taxon>Eukaryota</taxon>
        <taxon>Metazoa</taxon>
        <taxon>Chordata</taxon>
        <taxon>Craniata</taxon>
        <taxon>Vertebrata</taxon>
        <taxon>Euteleostomi</taxon>
        <taxon>Mammalia</taxon>
        <taxon>Eutheria</taxon>
        <taxon>Laurasiatheria</taxon>
        <taxon>Carnivora</taxon>
        <taxon>Caniformia</taxon>
        <taxon>Canidae</taxon>
        <taxon>Vulpes</taxon>
    </lineage>
</organism>
<gene>
    <name type="primary">IL10</name>
</gene>
<feature type="signal peptide" evidence="4">
    <location>
        <begin position="1"/>
        <end position="19"/>
    </location>
</feature>
<feature type="chain" id="PRO_0000235177" description="Interleukin-10">
    <location>
        <begin position="20"/>
        <end position="179"/>
    </location>
</feature>
<feature type="glycosylation site" description="N-linked (GlcNAc...) asparagine" evidence="4">
    <location>
        <position position="135"/>
    </location>
</feature>
<feature type="disulfide bond" evidence="1">
    <location>
        <begin position="31"/>
        <end position="127"/>
    </location>
</feature>
<feature type="disulfide bond" evidence="1">
    <location>
        <begin position="81"/>
        <end position="133"/>
    </location>
</feature>